<reference key="1">
    <citation type="journal article" date="2005" name="PLoS Genet.">
        <title>Life in hot carbon monoxide: the complete genome sequence of Carboxydothermus hydrogenoformans Z-2901.</title>
        <authorList>
            <person name="Wu M."/>
            <person name="Ren Q."/>
            <person name="Durkin A.S."/>
            <person name="Daugherty S.C."/>
            <person name="Brinkac L.M."/>
            <person name="Dodson R.J."/>
            <person name="Madupu R."/>
            <person name="Sullivan S.A."/>
            <person name="Kolonay J.F."/>
            <person name="Nelson W.C."/>
            <person name="Tallon L.J."/>
            <person name="Jones K.M."/>
            <person name="Ulrich L.E."/>
            <person name="Gonzalez J.M."/>
            <person name="Zhulin I.B."/>
            <person name="Robb F.T."/>
            <person name="Eisen J.A."/>
        </authorList>
    </citation>
    <scope>NUCLEOTIDE SEQUENCE [LARGE SCALE GENOMIC DNA]</scope>
    <source>
        <strain>ATCC BAA-161 / DSM 6008 / Z-2901</strain>
    </source>
</reference>
<protein>
    <recommendedName>
        <fullName evidence="1">Large ribosomal subunit protein uL24</fullName>
    </recommendedName>
    <alternativeName>
        <fullName evidence="2">50S ribosomal protein L24</fullName>
    </alternativeName>
</protein>
<name>RL24_CARHZ</name>
<dbReference type="EMBL" id="CP000141">
    <property type="protein sequence ID" value="ABB14726.1"/>
    <property type="molecule type" value="Genomic_DNA"/>
</dbReference>
<dbReference type="RefSeq" id="WP_011345180.1">
    <property type="nucleotide sequence ID" value="NC_007503.1"/>
</dbReference>
<dbReference type="SMR" id="Q3A9S7"/>
<dbReference type="FunCoup" id="Q3A9S7">
    <property type="interactions" value="437"/>
</dbReference>
<dbReference type="STRING" id="246194.CHY_2298"/>
<dbReference type="KEGG" id="chy:CHY_2298"/>
<dbReference type="eggNOG" id="COG0198">
    <property type="taxonomic scope" value="Bacteria"/>
</dbReference>
<dbReference type="HOGENOM" id="CLU_093315_2_0_9"/>
<dbReference type="InParanoid" id="Q3A9S7"/>
<dbReference type="OrthoDB" id="9807419at2"/>
<dbReference type="Proteomes" id="UP000002706">
    <property type="component" value="Chromosome"/>
</dbReference>
<dbReference type="GO" id="GO:1990904">
    <property type="term" value="C:ribonucleoprotein complex"/>
    <property type="evidence" value="ECO:0007669"/>
    <property type="project" value="UniProtKB-KW"/>
</dbReference>
<dbReference type="GO" id="GO:0005840">
    <property type="term" value="C:ribosome"/>
    <property type="evidence" value="ECO:0007669"/>
    <property type="project" value="UniProtKB-KW"/>
</dbReference>
<dbReference type="GO" id="GO:0019843">
    <property type="term" value="F:rRNA binding"/>
    <property type="evidence" value="ECO:0007669"/>
    <property type="project" value="UniProtKB-UniRule"/>
</dbReference>
<dbReference type="GO" id="GO:0003735">
    <property type="term" value="F:structural constituent of ribosome"/>
    <property type="evidence" value="ECO:0007669"/>
    <property type="project" value="InterPro"/>
</dbReference>
<dbReference type="GO" id="GO:0006412">
    <property type="term" value="P:translation"/>
    <property type="evidence" value="ECO:0007669"/>
    <property type="project" value="UniProtKB-UniRule"/>
</dbReference>
<dbReference type="CDD" id="cd06089">
    <property type="entry name" value="KOW_RPL26"/>
    <property type="match status" value="1"/>
</dbReference>
<dbReference type="FunFam" id="2.30.30.30:FF:000004">
    <property type="entry name" value="50S ribosomal protein L24"/>
    <property type="match status" value="1"/>
</dbReference>
<dbReference type="Gene3D" id="2.30.30.30">
    <property type="match status" value="1"/>
</dbReference>
<dbReference type="HAMAP" id="MF_01326_B">
    <property type="entry name" value="Ribosomal_uL24_B"/>
    <property type="match status" value="1"/>
</dbReference>
<dbReference type="InterPro" id="IPR005824">
    <property type="entry name" value="KOW"/>
</dbReference>
<dbReference type="InterPro" id="IPR014722">
    <property type="entry name" value="Rib_uL2_dom2"/>
</dbReference>
<dbReference type="InterPro" id="IPR003256">
    <property type="entry name" value="Ribosomal_uL24"/>
</dbReference>
<dbReference type="InterPro" id="IPR041988">
    <property type="entry name" value="Ribosomal_uL24_KOW"/>
</dbReference>
<dbReference type="InterPro" id="IPR008991">
    <property type="entry name" value="Translation_prot_SH3-like_sf"/>
</dbReference>
<dbReference type="NCBIfam" id="TIGR01079">
    <property type="entry name" value="rplX_bact"/>
    <property type="match status" value="1"/>
</dbReference>
<dbReference type="PANTHER" id="PTHR12903">
    <property type="entry name" value="MITOCHONDRIAL RIBOSOMAL PROTEIN L24"/>
    <property type="match status" value="1"/>
</dbReference>
<dbReference type="Pfam" id="PF00467">
    <property type="entry name" value="KOW"/>
    <property type="match status" value="1"/>
</dbReference>
<dbReference type="Pfam" id="PF17136">
    <property type="entry name" value="ribosomal_L24"/>
    <property type="match status" value="1"/>
</dbReference>
<dbReference type="SMART" id="SM00739">
    <property type="entry name" value="KOW"/>
    <property type="match status" value="1"/>
</dbReference>
<dbReference type="SUPFAM" id="SSF50104">
    <property type="entry name" value="Translation proteins SH3-like domain"/>
    <property type="match status" value="1"/>
</dbReference>
<gene>
    <name evidence="1" type="primary">rplX</name>
    <name type="ordered locus">CHY_2298</name>
</gene>
<accession>Q3A9S7</accession>
<sequence length="107" mass="11761">MPKLKVKKGDMVLVIAGKDKDKKGKIVQVLPKENRVVVEGVNIVKRHTRPNPKLPQGGIVEKEAPIHVSNVMVICPSCGKPTRVGKKFLADGKKIRVCKKCGESLDR</sequence>
<keyword id="KW-1185">Reference proteome</keyword>
<keyword id="KW-0687">Ribonucleoprotein</keyword>
<keyword id="KW-0689">Ribosomal protein</keyword>
<keyword id="KW-0694">RNA-binding</keyword>
<keyword id="KW-0699">rRNA-binding</keyword>
<comment type="function">
    <text evidence="1">One of two assembly initiator proteins, it binds directly to the 5'-end of the 23S rRNA, where it nucleates assembly of the 50S subunit.</text>
</comment>
<comment type="function">
    <text evidence="1">One of the proteins that surrounds the polypeptide exit tunnel on the outside of the subunit.</text>
</comment>
<comment type="subunit">
    <text evidence="1">Part of the 50S ribosomal subunit.</text>
</comment>
<comment type="similarity">
    <text evidence="1">Belongs to the universal ribosomal protein uL24 family.</text>
</comment>
<feature type="chain" id="PRO_0000241582" description="Large ribosomal subunit protein uL24">
    <location>
        <begin position="1"/>
        <end position="107"/>
    </location>
</feature>
<organism>
    <name type="scientific">Carboxydothermus hydrogenoformans (strain ATCC BAA-161 / DSM 6008 / Z-2901)</name>
    <dbReference type="NCBI Taxonomy" id="246194"/>
    <lineage>
        <taxon>Bacteria</taxon>
        <taxon>Bacillati</taxon>
        <taxon>Bacillota</taxon>
        <taxon>Clostridia</taxon>
        <taxon>Thermoanaerobacterales</taxon>
        <taxon>Thermoanaerobacteraceae</taxon>
        <taxon>Carboxydothermus</taxon>
    </lineage>
</organism>
<evidence type="ECO:0000255" key="1">
    <source>
        <dbReference type="HAMAP-Rule" id="MF_01326"/>
    </source>
</evidence>
<evidence type="ECO:0000305" key="2"/>
<proteinExistence type="inferred from homology"/>